<comment type="catalytic activity">
    <reaction evidence="1">
        <text>(S)-2,3,4,5-tetrahydrodipicolinate + succinyl-CoA + H2O = (S)-2-succinylamino-6-oxoheptanedioate + CoA</text>
        <dbReference type="Rhea" id="RHEA:17325"/>
        <dbReference type="ChEBI" id="CHEBI:15377"/>
        <dbReference type="ChEBI" id="CHEBI:15685"/>
        <dbReference type="ChEBI" id="CHEBI:16845"/>
        <dbReference type="ChEBI" id="CHEBI:57287"/>
        <dbReference type="ChEBI" id="CHEBI:57292"/>
        <dbReference type="EC" id="2.3.1.117"/>
    </reaction>
</comment>
<comment type="pathway">
    <text evidence="1">Amino-acid biosynthesis; L-lysine biosynthesis via DAP pathway; LL-2,6-diaminopimelate from (S)-tetrahydrodipicolinate (succinylase route): step 1/3.</text>
</comment>
<comment type="subcellular location">
    <subcellularLocation>
        <location evidence="1">Cytoplasm</location>
    </subcellularLocation>
</comment>
<comment type="similarity">
    <text evidence="1">Belongs to the transferase hexapeptide repeat family.</text>
</comment>
<dbReference type="EC" id="2.3.1.117" evidence="1"/>
<dbReference type="EMBL" id="CP001016">
    <property type="protein sequence ID" value="ACB96891.1"/>
    <property type="molecule type" value="Genomic_DNA"/>
</dbReference>
<dbReference type="RefSeq" id="WP_012386239.1">
    <property type="nucleotide sequence ID" value="NC_010581.1"/>
</dbReference>
<dbReference type="SMR" id="B2IDV9"/>
<dbReference type="STRING" id="395963.Bind_3332"/>
<dbReference type="KEGG" id="bid:Bind_3332"/>
<dbReference type="eggNOG" id="COG2171">
    <property type="taxonomic scope" value="Bacteria"/>
</dbReference>
<dbReference type="HOGENOM" id="CLU_050859_0_1_5"/>
<dbReference type="OrthoDB" id="9775362at2"/>
<dbReference type="UniPathway" id="UPA00034">
    <property type="reaction ID" value="UER00019"/>
</dbReference>
<dbReference type="Proteomes" id="UP000001695">
    <property type="component" value="Chromosome"/>
</dbReference>
<dbReference type="GO" id="GO:0005737">
    <property type="term" value="C:cytoplasm"/>
    <property type="evidence" value="ECO:0007669"/>
    <property type="project" value="UniProtKB-SubCell"/>
</dbReference>
<dbReference type="GO" id="GO:0008666">
    <property type="term" value="F:2,3,4,5-tetrahydropyridine-2,6-dicarboxylate N-succinyltransferase activity"/>
    <property type="evidence" value="ECO:0007669"/>
    <property type="project" value="UniProtKB-UniRule"/>
</dbReference>
<dbReference type="GO" id="GO:0016779">
    <property type="term" value="F:nucleotidyltransferase activity"/>
    <property type="evidence" value="ECO:0007669"/>
    <property type="project" value="TreeGrafter"/>
</dbReference>
<dbReference type="GO" id="GO:0019877">
    <property type="term" value="P:diaminopimelate biosynthetic process"/>
    <property type="evidence" value="ECO:0007669"/>
    <property type="project" value="UniProtKB-UniRule"/>
</dbReference>
<dbReference type="GO" id="GO:0009089">
    <property type="term" value="P:lysine biosynthetic process via diaminopimelate"/>
    <property type="evidence" value="ECO:0007669"/>
    <property type="project" value="UniProtKB-UniRule"/>
</dbReference>
<dbReference type="CDD" id="cd03350">
    <property type="entry name" value="LbH_THP_succinylT"/>
    <property type="match status" value="1"/>
</dbReference>
<dbReference type="Gene3D" id="2.160.10.10">
    <property type="entry name" value="Hexapeptide repeat proteins"/>
    <property type="match status" value="1"/>
</dbReference>
<dbReference type="Gene3D" id="1.10.166.10">
    <property type="entry name" value="Tetrahydrodipicolinate-N-succinyltransferase, N-terminal domain"/>
    <property type="match status" value="1"/>
</dbReference>
<dbReference type="HAMAP" id="MF_00811">
    <property type="entry name" value="DapD"/>
    <property type="match status" value="1"/>
</dbReference>
<dbReference type="InterPro" id="IPR005664">
    <property type="entry name" value="DapD_Trfase_Hexpep_rpt_fam"/>
</dbReference>
<dbReference type="InterPro" id="IPR001451">
    <property type="entry name" value="Hexapep"/>
</dbReference>
<dbReference type="InterPro" id="IPR018357">
    <property type="entry name" value="Hexapep_transf_CS"/>
</dbReference>
<dbReference type="InterPro" id="IPR023180">
    <property type="entry name" value="THP_succinylTrfase_dom1"/>
</dbReference>
<dbReference type="InterPro" id="IPR037133">
    <property type="entry name" value="THP_succinylTrfase_N_sf"/>
</dbReference>
<dbReference type="InterPro" id="IPR011004">
    <property type="entry name" value="Trimer_LpxA-like_sf"/>
</dbReference>
<dbReference type="NCBIfam" id="TIGR00965">
    <property type="entry name" value="dapD"/>
    <property type="match status" value="1"/>
</dbReference>
<dbReference type="NCBIfam" id="NF008808">
    <property type="entry name" value="PRK11830.1"/>
    <property type="match status" value="1"/>
</dbReference>
<dbReference type="PANTHER" id="PTHR19136:SF52">
    <property type="entry name" value="2,3,4,5-TETRAHYDROPYRIDINE-2,6-DICARBOXYLATE N-SUCCINYLTRANSFERASE"/>
    <property type="match status" value="1"/>
</dbReference>
<dbReference type="PANTHER" id="PTHR19136">
    <property type="entry name" value="MOLYBDENUM COFACTOR GUANYLYLTRANSFERASE"/>
    <property type="match status" value="1"/>
</dbReference>
<dbReference type="Pfam" id="PF14602">
    <property type="entry name" value="Hexapep_2"/>
    <property type="match status" value="1"/>
</dbReference>
<dbReference type="Pfam" id="PF14805">
    <property type="entry name" value="THDPS_N_2"/>
    <property type="match status" value="1"/>
</dbReference>
<dbReference type="SUPFAM" id="SSF51161">
    <property type="entry name" value="Trimeric LpxA-like enzymes"/>
    <property type="match status" value="1"/>
</dbReference>
<dbReference type="PROSITE" id="PS00101">
    <property type="entry name" value="HEXAPEP_TRANSFERASES"/>
    <property type="match status" value="1"/>
</dbReference>
<keyword id="KW-0012">Acyltransferase</keyword>
<keyword id="KW-0028">Amino-acid biosynthesis</keyword>
<keyword id="KW-0963">Cytoplasm</keyword>
<keyword id="KW-0220">Diaminopimelate biosynthesis</keyword>
<keyword id="KW-0457">Lysine biosynthesis</keyword>
<keyword id="KW-1185">Reference proteome</keyword>
<keyword id="KW-0677">Repeat</keyword>
<keyword id="KW-0808">Transferase</keyword>
<feature type="chain" id="PRO_1000134028" description="2,3,4,5-tetrahydropyridine-2,6-dicarboxylate N-succinyltransferase">
    <location>
        <begin position="1"/>
        <end position="285"/>
    </location>
</feature>
<accession>B2IDV9</accession>
<protein>
    <recommendedName>
        <fullName evidence="1">2,3,4,5-tetrahydropyridine-2,6-dicarboxylate N-succinyltransferase</fullName>
        <ecNumber evidence="1">2.3.1.117</ecNumber>
    </recommendedName>
    <alternativeName>
        <fullName evidence="1">Tetrahydrodipicolinate N-succinyltransferase</fullName>
        <shortName evidence="1">THP succinyltransferase</shortName>
        <shortName evidence="1">Tetrahydropicolinate succinylase</shortName>
    </alternativeName>
</protein>
<name>DAPD_BEII9</name>
<proteinExistence type="inferred from homology"/>
<sequence>MANDKLESLIEAAFEDRAQINASTQGDVRDGVERALLELDSGKLRVAEKQAGATGPDAWKVNQWLKKAVLLSFRLNDMSTIEGGPGGSSWWDKVPSKFAGWTAAEHAAAGFRSVPNCVVRRSAYIAPGVVLMPSFVNLGAYVDTGSMVDTWATVGSCAQIGKNVHLSGGVGIGGVLEPLQANPTIIEDDCFIGARSEIVEGVIIGQGSVVSMGVFISSSTKIIDRATGKIHIGYVPPYSVVVSGNLPGKNLPDGTPGPSLYCAVIVKTVDAQTRSKTGINELLRD</sequence>
<evidence type="ECO:0000255" key="1">
    <source>
        <dbReference type="HAMAP-Rule" id="MF_00811"/>
    </source>
</evidence>
<organism>
    <name type="scientific">Beijerinckia indica subsp. indica (strain ATCC 9039 / DSM 1715 / NCIMB 8712)</name>
    <dbReference type="NCBI Taxonomy" id="395963"/>
    <lineage>
        <taxon>Bacteria</taxon>
        <taxon>Pseudomonadati</taxon>
        <taxon>Pseudomonadota</taxon>
        <taxon>Alphaproteobacteria</taxon>
        <taxon>Hyphomicrobiales</taxon>
        <taxon>Beijerinckiaceae</taxon>
        <taxon>Beijerinckia</taxon>
    </lineage>
</organism>
<gene>
    <name evidence="1" type="primary">dapD</name>
    <name type="ordered locus">Bind_3332</name>
</gene>
<reference key="1">
    <citation type="journal article" date="2010" name="J. Bacteriol.">
        <title>Complete genome sequence of Beijerinckia indica subsp. indica.</title>
        <authorList>
            <person name="Tamas I."/>
            <person name="Dedysh S.N."/>
            <person name="Liesack W."/>
            <person name="Stott M.B."/>
            <person name="Alam M."/>
            <person name="Murrell J.C."/>
            <person name="Dunfield P.F."/>
        </authorList>
    </citation>
    <scope>NUCLEOTIDE SEQUENCE [LARGE SCALE GENOMIC DNA]</scope>
    <source>
        <strain>ATCC 9039 / DSM 1715 / NCIMB 8712</strain>
    </source>
</reference>